<protein>
    <recommendedName>
        <fullName evidence="1">tRNA pseudouridine synthase B</fullName>
        <ecNumber evidence="1">5.4.99.25</ecNumber>
    </recommendedName>
    <alternativeName>
        <fullName evidence="1">tRNA pseudouridine(55) synthase</fullName>
        <shortName evidence="1">Psi55 synthase</shortName>
    </alternativeName>
    <alternativeName>
        <fullName evidence="1">tRNA pseudouridylate synthase</fullName>
    </alternativeName>
    <alternativeName>
        <fullName evidence="1">tRNA-uridine isomerase</fullName>
    </alternativeName>
</protein>
<feature type="chain" id="PRO_1000149834" description="tRNA pseudouridine synthase B">
    <location>
        <begin position="1"/>
        <end position="316"/>
    </location>
</feature>
<feature type="active site" description="Nucleophile" evidence="1">
    <location>
        <position position="47"/>
    </location>
</feature>
<accession>B5FA81</accession>
<organism>
    <name type="scientific">Aliivibrio fischeri (strain MJ11)</name>
    <name type="common">Vibrio fischeri</name>
    <dbReference type="NCBI Taxonomy" id="388396"/>
    <lineage>
        <taxon>Bacteria</taxon>
        <taxon>Pseudomonadati</taxon>
        <taxon>Pseudomonadota</taxon>
        <taxon>Gammaproteobacteria</taxon>
        <taxon>Vibrionales</taxon>
        <taxon>Vibrionaceae</taxon>
        <taxon>Aliivibrio</taxon>
    </lineage>
</organism>
<comment type="function">
    <text evidence="1">Responsible for synthesis of pseudouridine from uracil-55 in the psi GC loop of transfer RNAs.</text>
</comment>
<comment type="catalytic activity">
    <reaction evidence="1">
        <text>uridine(55) in tRNA = pseudouridine(55) in tRNA</text>
        <dbReference type="Rhea" id="RHEA:42532"/>
        <dbReference type="Rhea" id="RHEA-COMP:10101"/>
        <dbReference type="Rhea" id="RHEA-COMP:10102"/>
        <dbReference type="ChEBI" id="CHEBI:65314"/>
        <dbReference type="ChEBI" id="CHEBI:65315"/>
        <dbReference type="EC" id="5.4.99.25"/>
    </reaction>
</comment>
<comment type="similarity">
    <text evidence="1">Belongs to the pseudouridine synthase TruB family. Type 1 subfamily.</text>
</comment>
<reference key="1">
    <citation type="submission" date="2008-08" db="EMBL/GenBank/DDBJ databases">
        <title>Complete sequence of Vibrio fischeri strain MJ11.</title>
        <authorList>
            <person name="Mandel M.J."/>
            <person name="Stabb E.V."/>
            <person name="Ruby E.G."/>
            <person name="Ferriera S."/>
            <person name="Johnson J."/>
            <person name="Kravitz S."/>
            <person name="Beeson K."/>
            <person name="Sutton G."/>
            <person name="Rogers Y.-H."/>
            <person name="Friedman R."/>
            <person name="Frazier M."/>
            <person name="Venter J.C."/>
        </authorList>
    </citation>
    <scope>NUCLEOTIDE SEQUENCE [LARGE SCALE GENOMIC DNA]</scope>
    <source>
        <strain>MJ11</strain>
    </source>
</reference>
<keyword id="KW-0413">Isomerase</keyword>
<keyword id="KW-0819">tRNA processing</keyword>
<gene>
    <name evidence="1" type="primary">truB</name>
    <name type="ordered locus">VFMJ11_0489</name>
</gene>
<proteinExistence type="inferred from homology"/>
<evidence type="ECO:0000255" key="1">
    <source>
        <dbReference type="HAMAP-Rule" id="MF_01080"/>
    </source>
</evidence>
<sequence>MARRRKGRPVNGVILIDKPTGITSNDTLQKVKRIYFAEKAGHTGALDPLATGMLPICLGEATKFSQFLLDSDKRYRVVAKLGERTNTSDSDGEVVQTREVKVDRGQLERCIAKFRGTTDQIPSMFSALKYQGRPLYEYAREGIEVPRESRKITVYSIELLRFEGHEVEMEVHCSKGTYIRTITDDLGEMLGCGAHVTYLRRTGVSNYPYENMVTIEDLEALLEQAHREERAPRELLDPLLMPMDSAVQDLPEVNMIPELADHVLHGQPVQVFGAPQDGIVRMTSGDERLFIGVGHIDDDGRVAPKRLVVFRDEEEK</sequence>
<name>TRUB_ALIFM</name>
<dbReference type="EC" id="5.4.99.25" evidence="1"/>
<dbReference type="EMBL" id="CP001139">
    <property type="protein sequence ID" value="ACH65915.1"/>
    <property type="molecule type" value="Genomic_DNA"/>
</dbReference>
<dbReference type="RefSeq" id="WP_005417681.1">
    <property type="nucleotide sequence ID" value="NC_011184.1"/>
</dbReference>
<dbReference type="SMR" id="B5FA81"/>
<dbReference type="KEGG" id="vfm:VFMJ11_0489"/>
<dbReference type="HOGENOM" id="CLU_032087_0_3_6"/>
<dbReference type="Proteomes" id="UP000001857">
    <property type="component" value="Chromosome I"/>
</dbReference>
<dbReference type="GO" id="GO:0003723">
    <property type="term" value="F:RNA binding"/>
    <property type="evidence" value="ECO:0007669"/>
    <property type="project" value="InterPro"/>
</dbReference>
<dbReference type="GO" id="GO:0160148">
    <property type="term" value="F:tRNA pseudouridine(55) synthase activity"/>
    <property type="evidence" value="ECO:0007669"/>
    <property type="project" value="UniProtKB-EC"/>
</dbReference>
<dbReference type="GO" id="GO:1990481">
    <property type="term" value="P:mRNA pseudouridine synthesis"/>
    <property type="evidence" value="ECO:0007669"/>
    <property type="project" value="TreeGrafter"/>
</dbReference>
<dbReference type="GO" id="GO:0031119">
    <property type="term" value="P:tRNA pseudouridine synthesis"/>
    <property type="evidence" value="ECO:0007669"/>
    <property type="project" value="UniProtKB-UniRule"/>
</dbReference>
<dbReference type="CDD" id="cd02573">
    <property type="entry name" value="PseudoU_synth_EcTruB"/>
    <property type="match status" value="1"/>
</dbReference>
<dbReference type="CDD" id="cd21152">
    <property type="entry name" value="PUA_TruB_bacterial"/>
    <property type="match status" value="1"/>
</dbReference>
<dbReference type="FunFam" id="2.30.130.10:FF:000004">
    <property type="entry name" value="tRNA pseudouridine synthase B"/>
    <property type="match status" value="1"/>
</dbReference>
<dbReference type="FunFam" id="3.30.2350.10:FF:000003">
    <property type="entry name" value="tRNA pseudouridine synthase B"/>
    <property type="match status" value="1"/>
</dbReference>
<dbReference type="Gene3D" id="3.30.2350.10">
    <property type="entry name" value="Pseudouridine synthase"/>
    <property type="match status" value="1"/>
</dbReference>
<dbReference type="Gene3D" id="2.30.130.10">
    <property type="entry name" value="PUA domain"/>
    <property type="match status" value="1"/>
</dbReference>
<dbReference type="HAMAP" id="MF_01080">
    <property type="entry name" value="TruB_bact"/>
    <property type="match status" value="1"/>
</dbReference>
<dbReference type="InterPro" id="IPR020103">
    <property type="entry name" value="PsdUridine_synth_cat_dom_sf"/>
</dbReference>
<dbReference type="InterPro" id="IPR002501">
    <property type="entry name" value="PsdUridine_synth_N"/>
</dbReference>
<dbReference type="InterPro" id="IPR015947">
    <property type="entry name" value="PUA-like_sf"/>
</dbReference>
<dbReference type="InterPro" id="IPR036974">
    <property type="entry name" value="PUA_sf"/>
</dbReference>
<dbReference type="InterPro" id="IPR014780">
    <property type="entry name" value="tRNA_psdUridine_synth_TruB"/>
</dbReference>
<dbReference type="InterPro" id="IPR015240">
    <property type="entry name" value="tRNA_sdUridine_synth_fam1_C"/>
</dbReference>
<dbReference type="InterPro" id="IPR032819">
    <property type="entry name" value="TruB_C"/>
</dbReference>
<dbReference type="NCBIfam" id="TIGR00431">
    <property type="entry name" value="TruB"/>
    <property type="match status" value="1"/>
</dbReference>
<dbReference type="PANTHER" id="PTHR13767:SF2">
    <property type="entry name" value="PSEUDOURIDYLATE SYNTHASE TRUB1"/>
    <property type="match status" value="1"/>
</dbReference>
<dbReference type="PANTHER" id="PTHR13767">
    <property type="entry name" value="TRNA-PSEUDOURIDINE SYNTHASE"/>
    <property type="match status" value="1"/>
</dbReference>
<dbReference type="Pfam" id="PF09157">
    <property type="entry name" value="TruB-C_2"/>
    <property type="match status" value="1"/>
</dbReference>
<dbReference type="Pfam" id="PF16198">
    <property type="entry name" value="TruB_C_2"/>
    <property type="match status" value="1"/>
</dbReference>
<dbReference type="Pfam" id="PF01509">
    <property type="entry name" value="TruB_N"/>
    <property type="match status" value="1"/>
</dbReference>
<dbReference type="SUPFAM" id="SSF55120">
    <property type="entry name" value="Pseudouridine synthase"/>
    <property type="match status" value="1"/>
</dbReference>
<dbReference type="SUPFAM" id="SSF88697">
    <property type="entry name" value="PUA domain-like"/>
    <property type="match status" value="1"/>
</dbReference>